<evidence type="ECO:0000255" key="1">
    <source>
        <dbReference type="HAMAP-Rule" id="MF_01347"/>
    </source>
</evidence>
<protein>
    <recommendedName>
        <fullName evidence="1">ATP synthase subunit beta 2</fullName>
        <ecNumber evidence="1">7.1.2.2</ecNumber>
    </recommendedName>
    <alternativeName>
        <fullName evidence="1">ATP synthase F1 sector subunit beta 2</fullName>
    </alternativeName>
    <alternativeName>
        <fullName evidence="1">F-ATPase subunit beta 2</fullName>
    </alternativeName>
</protein>
<dbReference type="EC" id="7.1.2.2" evidence="1"/>
<dbReference type="EMBL" id="CP000096">
    <property type="protein sequence ID" value="ABB23925.1"/>
    <property type="molecule type" value="Genomic_DNA"/>
</dbReference>
<dbReference type="SMR" id="Q3B406"/>
<dbReference type="STRING" id="319225.Plut_1063"/>
<dbReference type="KEGG" id="plt:Plut_1063"/>
<dbReference type="eggNOG" id="COG0055">
    <property type="taxonomic scope" value="Bacteria"/>
</dbReference>
<dbReference type="HOGENOM" id="CLU_022398_0_2_10"/>
<dbReference type="OrthoDB" id="9801639at2"/>
<dbReference type="Proteomes" id="UP000002709">
    <property type="component" value="Chromosome"/>
</dbReference>
<dbReference type="GO" id="GO:0005886">
    <property type="term" value="C:plasma membrane"/>
    <property type="evidence" value="ECO:0007669"/>
    <property type="project" value="UniProtKB-SubCell"/>
</dbReference>
<dbReference type="GO" id="GO:0045259">
    <property type="term" value="C:proton-transporting ATP synthase complex"/>
    <property type="evidence" value="ECO:0007669"/>
    <property type="project" value="UniProtKB-KW"/>
</dbReference>
<dbReference type="GO" id="GO:0005524">
    <property type="term" value="F:ATP binding"/>
    <property type="evidence" value="ECO:0007669"/>
    <property type="project" value="UniProtKB-UniRule"/>
</dbReference>
<dbReference type="GO" id="GO:0016887">
    <property type="term" value="F:ATP hydrolysis activity"/>
    <property type="evidence" value="ECO:0007669"/>
    <property type="project" value="InterPro"/>
</dbReference>
<dbReference type="GO" id="GO:0046933">
    <property type="term" value="F:proton-transporting ATP synthase activity, rotational mechanism"/>
    <property type="evidence" value="ECO:0007669"/>
    <property type="project" value="UniProtKB-UniRule"/>
</dbReference>
<dbReference type="GO" id="GO:0046961">
    <property type="term" value="F:proton-transporting ATPase activity, rotational mechanism"/>
    <property type="evidence" value="ECO:0007669"/>
    <property type="project" value="InterPro"/>
</dbReference>
<dbReference type="CDD" id="cd18110">
    <property type="entry name" value="ATP-synt_F1_beta_C"/>
    <property type="match status" value="1"/>
</dbReference>
<dbReference type="CDD" id="cd18115">
    <property type="entry name" value="ATP-synt_F1_beta_N"/>
    <property type="match status" value="1"/>
</dbReference>
<dbReference type="CDD" id="cd01133">
    <property type="entry name" value="F1-ATPase_beta_CD"/>
    <property type="match status" value="1"/>
</dbReference>
<dbReference type="FunFam" id="1.10.1140.10:FF:000006">
    <property type="entry name" value="ATP synthase subunit beta"/>
    <property type="match status" value="1"/>
</dbReference>
<dbReference type="FunFam" id="3.40.50.300:FF:001630">
    <property type="entry name" value="ATP synthase subunit beta"/>
    <property type="match status" value="1"/>
</dbReference>
<dbReference type="Gene3D" id="2.40.10.170">
    <property type="match status" value="1"/>
</dbReference>
<dbReference type="Gene3D" id="1.10.1140.10">
    <property type="entry name" value="Bovine Mitochondrial F1-atpase, Atp Synthase Beta Chain, Chain D, domain 3"/>
    <property type="match status" value="1"/>
</dbReference>
<dbReference type="Gene3D" id="3.40.50.300">
    <property type="entry name" value="P-loop containing nucleotide triphosphate hydrolases"/>
    <property type="match status" value="1"/>
</dbReference>
<dbReference type="HAMAP" id="MF_01347">
    <property type="entry name" value="ATP_synth_beta_bact"/>
    <property type="match status" value="1"/>
</dbReference>
<dbReference type="InterPro" id="IPR003593">
    <property type="entry name" value="AAA+_ATPase"/>
</dbReference>
<dbReference type="InterPro" id="IPR017691">
    <property type="entry name" value="Alt_ATPase_F1_bsu"/>
</dbReference>
<dbReference type="InterPro" id="IPR055190">
    <property type="entry name" value="ATP-synt_VA_C"/>
</dbReference>
<dbReference type="InterPro" id="IPR005722">
    <property type="entry name" value="ATP_synth_F1_bsu"/>
</dbReference>
<dbReference type="InterPro" id="IPR020003">
    <property type="entry name" value="ATPase_a/bsu_AS"/>
</dbReference>
<dbReference type="InterPro" id="IPR050053">
    <property type="entry name" value="ATPase_alpha/beta_chains"/>
</dbReference>
<dbReference type="InterPro" id="IPR004100">
    <property type="entry name" value="ATPase_F1/V1/A1_a/bsu_N"/>
</dbReference>
<dbReference type="InterPro" id="IPR036121">
    <property type="entry name" value="ATPase_F1/V1/A1_a/bsu_N_sf"/>
</dbReference>
<dbReference type="InterPro" id="IPR000194">
    <property type="entry name" value="ATPase_F1/V1/A1_a/bsu_nucl-bd"/>
</dbReference>
<dbReference type="InterPro" id="IPR024034">
    <property type="entry name" value="ATPase_F1/V1_b/a_C"/>
</dbReference>
<dbReference type="InterPro" id="IPR027417">
    <property type="entry name" value="P-loop_NTPase"/>
</dbReference>
<dbReference type="NCBIfam" id="TIGR03305">
    <property type="entry name" value="alt_F1F0_F1_bet"/>
    <property type="match status" value="1"/>
</dbReference>
<dbReference type="NCBIfam" id="TIGR01039">
    <property type="entry name" value="atpD"/>
    <property type="match status" value="1"/>
</dbReference>
<dbReference type="PANTHER" id="PTHR15184">
    <property type="entry name" value="ATP SYNTHASE"/>
    <property type="match status" value="1"/>
</dbReference>
<dbReference type="PANTHER" id="PTHR15184:SF71">
    <property type="entry name" value="ATP SYNTHASE SUBUNIT BETA, MITOCHONDRIAL"/>
    <property type="match status" value="1"/>
</dbReference>
<dbReference type="Pfam" id="PF00006">
    <property type="entry name" value="ATP-synt_ab"/>
    <property type="match status" value="1"/>
</dbReference>
<dbReference type="Pfam" id="PF02874">
    <property type="entry name" value="ATP-synt_ab_N"/>
    <property type="match status" value="1"/>
</dbReference>
<dbReference type="Pfam" id="PF22919">
    <property type="entry name" value="ATP-synt_VA_C"/>
    <property type="match status" value="1"/>
</dbReference>
<dbReference type="SMART" id="SM00382">
    <property type="entry name" value="AAA"/>
    <property type="match status" value="1"/>
</dbReference>
<dbReference type="SUPFAM" id="SSF47917">
    <property type="entry name" value="C-terminal domain of alpha and beta subunits of F1 ATP synthase"/>
    <property type="match status" value="1"/>
</dbReference>
<dbReference type="SUPFAM" id="SSF50615">
    <property type="entry name" value="N-terminal domain of alpha and beta subunits of F1 ATP synthase"/>
    <property type="match status" value="1"/>
</dbReference>
<dbReference type="SUPFAM" id="SSF52540">
    <property type="entry name" value="P-loop containing nucleoside triphosphate hydrolases"/>
    <property type="match status" value="1"/>
</dbReference>
<dbReference type="PROSITE" id="PS00152">
    <property type="entry name" value="ATPASE_ALPHA_BETA"/>
    <property type="match status" value="1"/>
</dbReference>
<feature type="chain" id="PRO_0000339566" description="ATP synthase subunit beta 2">
    <location>
        <begin position="1"/>
        <end position="468"/>
    </location>
</feature>
<feature type="binding site" evidence="1">
    <location>
        <begin position="155"/>
        <end position="162"/>
    </location>
    <ligand>
        <name>ATP</name>
        <dbReference type="ChEBI" id="CHEBI:30616"/>
    </ligand>
</feature>
<reference key="1">
    <citation type="submission" date="2005-08" db="EMBL/GenBank/DDBJ databases">
        <title>Complete sequence of Pelodictyon luteolum DSM 273.</title>
        <authorList>
            <consortium name="US DOE Joint Genome Institute"/>
            <person name="Copeland A."/>
            <person name="Lucas S."/>
            <person name="Lapidus A."/>
            <person name="Barry K."/>
            <person name="Detter J.C."/>
            <person name="Glavina T."/>
            <person name="Hammon N."/>
            <person name="Israni S."/>
            <person name="Pitluck S."/>
            <person name="Bryant D."/>
            <person name="Schmutz J."/>
            <person name="Larimer F."/>
            <person name="Land M."/>
            <person name="Kyrpides N."/>
            <person name="Ivanova N."/>
            <person name="Richardson P."/>
        </authorList>
    </citation>
    <scope>NUCLEOTIDE SEQUENCE [LARGE SCALE GENOMIC DNA]</scope>
    <source>
        <strain>DSM 273 / BCRC 81028 / 2530</strain>
    </source>
</reference>
<keyword id="KW-0066">ATP synthesis</keyword>
<keyword id="KW-0067">ATP-binding</keyword>
<keyword id="KW-0997">Cell inner membrane</keyword>
<keyword id="KW-1003">Cell membrane</keyword>
<keyword id="KW-0139">CF(1)</keyword>
<keyword id="KW-0375">Hydrogen ion transport</keyword>
<keyword id="KW-0406">Ion transport</keyword>
<keyword id="KW-0472">Membrane</keyword>
<keyword id="KW-0547">Nucleotide-binding</keyword>
<keyword id="KW-1185">Reference proteome</keyword>
<keyword id="KW-1278">Translocase</keyword>
<keyword id="KW-0813">Transport</keyword>
<accession>Q3B406</accession>
<gene>
    <name evidence="1" type="primary">atpD2</name>
    <name type="ordered locus">Plut_1063</name>
</gene>
<comment type="function">
    <text evidence="1">Produces ATP from ADP in the presence of a proton gradient across the membrane. The catalytic sites are hosted primarily by the beta subunits.</text>
</comment>
<comment type="catalytic activity">
    <reaction evidence="1">
        <text>ATP + H2O + 4 H(+)(in) = ADP + phosphate + 5 H(+)(out)</text>
        <dbReference type="Rhea" id="RHEA:57720"/>
        <dbReference type="ChEBI" id="CHEBI:15377"/>
        <dbReference type="ChEBI" id="CHEBI:15378"/>
        <dbReference type="ChEBI" id="CHEBI:30616"/>
        <dbReference type="ChEBI" id="CHEBI:43474"/>
        <dbReference type="ChEBI" id="CHEBI:456216"/>
        <dbReference type="EC" id="7.1.2.2"/>
    </reaction>
</comment>
<comment type="subunit">
    <text evidence="1">F-type ATPases have 2 components, CF(1) - the catalytic core - and CF(0) - the membrane proton channel. CF(1) has five subunits: alpha(3), beta(3), gamma(1), delta(1), epsilon(1). CF(0) has four main subunits: a(1), b(1), b'(1) and c(9-12).</text>
</comment>
<comment type="subcellular location">
    <subcellularLocation>
        <location evidence="1">Cell inner membrane</location>
        <topology evidence="1">Peripheral membrane protein</topology>
    </subcellularLocation>
</comment>
<comment type="similarity">
    <text evidence="1">Belongs to the ATPase alpha/beta chains family.</text>
</comment>
<proteinExistence type="inferred from homology"/>
<sequence>MDTADHHQRYGRVARIRGSVVDVRFERHLPPIHTILETGKDREVKIEVLTQLDDRHIRGIALTGTEGLCRAMAVLDTGMPLRAPVGKQILSRMFDVFGRPIDRGAPPPDVEWRGVHRMPPPLGRRSTRSEVFETGIKIIDLLSPLERGGKAGLFGGAGVGKTVLLTEMIHNMVHRHHGVSIFCGIGERCREGEELYRDMRDAGVLDSMVMVFGQMNEPPGSRFRVGLAALTMAEYFRDDQHEDVLLLIDNIFRFIQAGSEISGMMGQMPSRLGYQPTMGTELSQLEERIANTGTGAITSIQAVYVPADDFTDPAAVHTFSHLSASLTLSRKRAGEGFFPAIDPLQSGSKMTAPSIIGRRHYDLSRQIRRVLAQYSELKDIIAMLGLEQLSAEDRKLVARARRLERFLTQPFFTTEQFTGIEGRMVSLNDTIDGCERILRDEFADYPESSLYMIGTVAEARKNNAVHAP</sequence>
<name>ATPB2_CHLL3</name>
<organism>
    <name type="scientific">Chlorobium luteolum (strain DSM 273 / BCRC 81028 / 2530)</name>
    <name type="common">Pelodictyon luteolum</name>
    <dbReference type="NCBI Taxonomy" id="319225"/>
    <lineage>
        <taxon>Bacteria</taxon>
        <taxon>Pseudomonadati</taxon>
        <taxon>Chlorobiota</taxon>
        <taxon>Chlorobiia</taxon>
        <taxon>Chlorobiales</taxon>
        <taxon>Chlorobiaceae</taxon>
        <taxon>Chlorobium/Pelodictyon group</taxon>
        <taxon>Pelodictyon</taxon>
    </lineage>
</organism>